<evidence type="ECO:0000250" key="1">
    <source>
        <dbReference type="UniProtKB" id="G2QNH0"/>
    </source>
</evidence>
<evidence type="ECO:0000250" key="2">
    <source>
        <dbReference type="UniProtKB" id="P02722"/>
    </source>
</evidence>
<evidence type="ECO:0000250" key="3">
    <source>
        <dbReference type="UniProtKB" id="P12235"/>
    </source>
</evidence>
<evidence type="ECO:0000250" key="4">
    <source>
        <dbReference type="UniProtKB" id="P18239"/>
    </source>
</evidence>
<evidence type="ECO:0000250" key="5">
    <source>
        <dbReference type="UniProtKB" id="P31167"/>
    </source>
</evidence>
<evidence type="ECO:0000250" key="6">
    <source>
        <dbReference type="UniProtKB" id="P48962"/>
    </source>
</evidence>
<evidence type="ECO:0000255" key="7"/>
<evidence type="ECO:0000305" key="8"/>
<proteinExistence type="evidence at transcript level"/>
<accession>P25083</accession>
<dbReference type="EMBL" id="X62123">
    <property type="protein sequence ID" value="CAA44054.1"/>
    <property type="molecule type" value="mRNA"/>
</dbReference>
<dbReference type="PIR" id="S17917">
    <property type="entry name" value="S17917"/>
</dbReference>
<dbReference type="PIR" id="S21974">
    <property type="entry name" value="S21974"/>
</dbReference>
<dbReference type="SMR" id="P25083"/>
<dbReference type="FunCoup" id="P25083">
    <property type="interactions" value="1713"/>
</dbReference>
<dbReference type="STRING" id="4113.P25083"/>
<dbReference type="PaxDb" id="4113-PGSC0003DMT400035380"/>
<dbReference type="eggNOG" id="KOG0749">
    <property type="taxonomic scope" value="Eukaryota"/>
</dbReference>
<dbReference type="InParanoid" id="P25083"/>
<dbReference type="Proteomes" id="UP000011115">
    <property type="component" value="Unassembled WGS sequence"/>
</dbReference>
<dbReference type="ExpressionAtlas" id="P25083">
    <property type="expression patterns" value="baseline"/>
</dbReference>
<dbReference type="GO" id="GO:0005743">
    <property type="term" value="C:mitochondrial inner membrane"/>
    <property type="evidence" value="ECO:0007669"/>
    <property type="project" value="UniProtKB-SubCell"/>
</dbReference>
<dbReference type="GO" id="GO:0005471">
    <property type="term" value="F:ATP:ADP antiporter activity"/>
    <property type="evidence" value="ECO:0000318"/>
    <property type="project" value="GO_Central"/>
</dbReference>
<dbReference type="GO" id="GO:0140021">
    <property type="term" value="P:mitochondrial ADP transmembrane transport"/>
    <property type="evidence" value="ECO:0007669"/>
    <property type="project" value="InterPro"/>
</dbReference>
<dbReference type="GO" id="GO:1990544">
    <property type="term" value="P:mitochondrial ATP transmembrane transport"/>
    <property type="evidence" value="ECO:0007669"/>
    <property type="project" value="InterPro"/>
</dbReference>
<dbReference type="FunFam" id="1.50.40.10:FF:000001">
    <property type="entry name" value="ADP,ATP carrier protein, mitochondrial"/>
    <property type="match status" value="1"/>
</dbReference>
<dbReference type="Gene3D" id="1.50.40.10">
    <property type="entry name" value="Mitochondrial carrier domain"/>
    <property type="match status" value="1"/>
</dbReference>
<dbReference type="InterPro" id="IPR002113">
    <property type="entry name" value="ADT_euk_type"/>
</dbReference>
<dbReference type="InterPro" id="IPR002067">
    <property type="entry name" value="Mit_carrier"/>
</dbReference>
<dbReference type="InterPro" id="IPR018108">
    <property type="entry name" value="Mitochondrial_sb/sol_carrier"/>
</dbReference>
<dbReference type="InterPro" id="IPR023395">
    <property type="entry name" value="Mt_carrier_dom_sf"/>
</dbReference>
<dbReference type="PANTHER" id="PTHR45635">
    <property type="entry name" value="ADP,ATP CARRIER PROTEIN 1-RELATED-RELATED"/>
    <property type="match status" value="1"/>
</dbReference>
<dbReference type="PANTHER" id="PTHR45635:SF51">
    <property type="entry name" value="ADP,ATP CARRIER PROTEIN, MITOCHONDRIAL"/>
    <property type="match status" value="1"/>
</dbReference>
<dbReference type="Pfam" id="PF00153">
    <property type="entry name" value="Mito_carr"/>
    <property type="match status" value="3"/>
</dbReference>
<dbReference type="PRINTS" id="PR00927">
    <property type="entry name" value="ADPTRNSLCASE"/>
</dbReference>
<dbReference type="PRINTS" id="PR00926">
    <property type="entry name" value="MITOCARRIER"/>
</dbReference>
<dbReference type="SUPFAM" id="SSF103506">
    <property type="entry name" value="Mitochondrial carrier"/>
    <property type="match status" value="1"/>
</dbReference>
<dbReference type="PROSITE" id="PS50920">
    <property type="entry name" value="SOLCAR"/>
    <property type="match status" value="3"/>
</dbReference>
<protein>
    <recommendedName>
        <fullName>ADP,ATP carrier protein, mitochondrial</fullName>
    </recommendedName>
    <alternativeName>
        <fullName>ADP/ATP translocase</fullName>
    </alternativeName>
    <alternativeName>
        <fullName>Adenine nucleotide translocator</fullName>
        <shortName>ANT</shortName>
    </alternativeName>
</protein>
<comment type="function">
    <text evidence="1 6">ADP:ATP antiporter that mediates import of ADP into the mitochondrial matrix for ATP synthesis, and export of ATP out to fuel the cell (By similarity). Cycles between the cytoplasmic-open state (c-state) and the matrix-open state (m-state): operates by the alternating access mechanism with a single substrate-binding site intermittently exposed to either the cytosolic (c-state) or matrix (m-state) side of the inner mitochondrial membrane (By similarity).</text>
</comment>
<comment type="catalytic activity">
    <reaction evidence="6">
        <text>ADP(in) + ATP(out) = ADP(out) + ATP(in)</text>
        <dbReference type="Rhea" id="RHEA:34999"/>
        <dbReference type="ChEBI" id="CHEBI:30616"/>
        <dbReference type="ChEBI" id="CHEBI:456216"/>
    </reaction>
    <physiologicalReaction direction="left-to-right" evidence="6">
        <dbReference type="Rhea" id="RHEA:35000"/>
    </physiologicalReaction>
</comment>
<comment type="activity regulation">
    <text evidence="1">The matrix-open state (m-state) is inhibited by the membrane-permeable bongkrekic acid (BKA). The cytoplasmic-open state (c-state) is inhibited by the membrane-impermeable toxic inhibitor carboxyatractyloside (CATR).</text>
</comment>
<comment type="subunit">
    <text evidence="1 2">Monomer.</text>
</comment>
<comment type="subcellular location">
    <subcellularLocation>
        <location evidence="5">Mitochondrion inner membrane</location>
        <topology evidence="7">Multi-pass membrane protein</topology>
    </subcellularLocation>
</comment>
<comment type="similarity">
    <text evidence="8">Belongs to the mitochondrial carrier (TC 2.A.29) family.</text>
</comment>
<sequence length="386" mass="42058">MADMNQHPTVFQKAANQLDLRSSLSQDVHARYGGVQPAIYQRHFAYGNYSNAGLQRGQATQDLSLITSNASPVFVQAPQEKGFAAFATDFLMGGVSAAVSKTAAAPIERVKLLIQNQDEMLKAGRLSEPYKGIGECFGRTIKEEGFGSLWRGNTANVIRYFPTQALNFAFKDYFKRLFNFKKDRDGYWKWFAGNLASGGAAGASSLFFVYSLDYARTRLANDRKASKKGGERQFNGLVDVYKKTLKSDGIAGLYRGFNISCVGIIVYRGLYFGMYDSLKPVLLTGNLQDSFFASFGLGWLITNGAGLASYPIDTVRRRMMMTSGEAVKYKSSLDAFSQIVKNEGPKSLFKGAGANILRAVAGAGVLAGYDKLQVLVLGKKFGSGGA</sequence>
<gene>
    <name type="primary">ANT</name>
</gene>
<name>ADT1_SOLTU</name>
<keyword id="KW-0050">Antiport</keyword>
<keyword id="KW-0472">Membrane</keyword>
<keyword id="KW-0496">Mitochondrion</keyword>
<keyword id="KW-0999">Mitochondrion inner membrane</keyword>
<keyword id="KW-1185">Reference proteome</keyword>
<keyword id="KW-0677">Repeat</keyword>
<keyword id="KW-0809">Transit peptide</keyword>
<keyword id="KW-0812">Transmembrane</keyword>
<keyword id="KW-1133">Transmembrane helix</keyword>
<keyword id="KW-0813">Transport</keyword>
<feature type="transit peptide" description="Mitochondrion" evidence="7">
    <location>
        <begin position="1"/>
        <end position="77"/>
    </location>
</feature>
<feature type="chain" id="PRO_0000019251" description="ADP,ATP carrier protein, mitochondrial">
    <location>
        <begin position="78"/>
        <end position="386"/>
    </location>
</feature>
<feature type="transmembrane region" description="Helical; Name=1" evidence="4">
    <location>
        <begin position="86"/>
        <end position="113"/>
    </location>
</feature>
<feature type="transmembrane region" description="Helical; Name=2" evidence="4">
    <location>
        <begin position="154"/>
        <end position="178"/>
    </location>
</feature>
<feature type="transmembrane region" description="Helical; Name=3" evidence="4">
    <location>
        <begin position="187"/>
        <end position="207"/>
    </location>
</feature>
<feature type="transmembrane region" description="Helical; Name=4" evidence="4">
    <location>
        <begin position="257"/>
        <end position="278"/>
    </location>
</feature>
<feature type="transmembrane region" description="Helical; Name=5" evidence="4">
    <location>
        <begin position="292"/>
        <end position="312"/>
    </location>
</feature>
<feature type="transmembrane region" description="Helical; Name=6" evidence="4">
    <location>
        <begin position="352"/>
        <end position="372"/>
    </location>
</feature>
<feature type="repeat" description="Solcar 1">
    <location>
        <begin position="84"/>
        <end position="177"/>
    </location>
</feature>
<feature type="repeat" description="Solcar 2">
    <location>
        <begin position="189"/>
        <end position="281"/>
    </location>
</feature>
<feature type="repeat" description="Solcar 3">
    <location>
        <begin position="289"/>
        <end position="375"/>
    </location>
</feature>
<feature type="region of interest" description="Important for transport activity" evidence="3">
    <location>
        <begin position="316"/>
        <end position="321"/>
    </location>
</feature>
<feature type="short sequence motif" description="Nucleotide carrier signature motif" evidence="2">
    <location>
        <begin position="316"/>
        <end position="321"/>
    </location>
</feature>
<feature type="binding site" evidence="2">
    <location>
        <position position="159"/>
    </location>
    <ligand>
        <name>ADP</name>
        <dbReference type="ChEBI" id="CHEBI:456216"/>
    </ligand>
</feature>
<feature type="binding site" evidence="2">
    <location>
        <position position="171"/>
    </location>
    <ligand>
        <name>ADP</name>
        <dbReference type="ChEBI" id="CHEBI:456216"/>
    </ligand>
</feature>
<feature type="binding site" evidence="2">
    <location>
        <position position="316"/>
    </location>
    <ligand>
        <name>ADP</name>
        <dbReference type="ChEBI" id="CHEBI:456216"/>
    </ligand>
</feature>
<reference key="1">
    <citation type="journal article" date="1991" name="Curr. Genet.">
        <title>The ADP/ATP translocator from potato has a long amino-terminal extension.</title>
        <authorList>
            <person name="Emmermann M."/>
            <person name="Braun H.P."/>
            <person name="Schmitz U.K."/>
        </authorList>
    </citation>
    <scope>NUCLEOTIDE SEQUENCE [MRNA]</scope>
    <source>
        <strain>cv. Desiree</strain>
        <tissue>Green leaf</tissue>
    </source>
</reference>
<organism>
    <name type="scientific">Solanum tuberosum</name>
    <name type="common">Potato</name>
    <dbReference type="NCBI Taxonomy" id="4113"/>
    <lineage>
        <taxon>Eukaryota</taxon>
        <taxon>Viridiplantae</taxon>
        <taxon>Streptophyta</taxon>
        <taxon>Embryophyta</taxon>
        <taxon>Tracheophyta</taxon>
        <taxon>Spermatophyta</taxon>
        <taxon>Magnoliopsida</taxon>
        <taxon>eudicotyledons</taxon>
        <taxon>Gunneridae</taxon>
        <taxon>Pentapetalae</taxon>
        <taxon>asterids</taxon>
        <taxon>lamiids</taxon>
        <taxon>Solanales</taxon>
        <taxon>Solanaceae</taxon>
        <taxon>Solanoideae</taxon>
        <taxon>Solaneae</taxon>
        <taxon>Solanum</taxon>
    </lineage>
</organism>